<accession>Q6RSS2</accession>
<gene>
    <name evidence="1" type="primary">L</name>
</gene>
<organismHost>
    <name type="scientific">Sigmodon alstoni</name>
    <dbReference type="NCBI Taxonomy" id="134742"/>
</organismHost>
<dbReference type="EC" id="2.7.7.48" evidence="1"/>
<dbReference type="EC" id="3.1.-.-" evidence="1"/>
<dbReference type="EMBL" id="AY494081">
    <property type="protein sequence ID" value="AAS72554.1"/>
    <property type="molecule type" value="Genomic_RNA"/>
</dbReference>
<dbReference type="RefSeq" id="YP_025093.1">
    <property type="nucleotide sequence ID" value="NC_005897.1"/>
</dbReference>
<dbReference type="SMR" id="Q6RSS2"/>
<dbReference type="KEGG" id="vg:2943174"/>
<dbReference type="Proteomes" id="UP000009266">
    <property type="component" value="Genome"/>
</dbReference>
<dbReference type="GO" id="GO:0030430">
    <property type="term" value="C:host cell cytoplasm"/>
    <property type="evidence" value="ECO:0007669"/>
    <property type="project" value="UniProtKB-SubCell"/>
</dbReference>
<dbReference type="GO" id="GO:0044423">
    <property type="term" value="C:virion component"/>
    <property type="evidence" value="ECO:0007669"/>
    <property type="project" value="UniProtKB-KW"/>
</dbReference>
<dbReference type="GO" id="GO:0016787">
    <property type="term" value="F:hydrolase activity"/>
    <property type="evidence" value="ECO:0007669"/>
    <property type="project" value="UniProtKB-KW"/>
</dbReference>
<dbReference type="GO" id="GO:0046872">
    <property type="term" value="F:metal ion binding"/>
    <property type="evidence" value="ECO:0007669"/>
    <property type="project" value="UniProtKB-KW"/>
</dbReference>
<dbReference type="GO" id="GO:0000166">
    <property type="term" value="F:nucleotide binding"/>
    <property type="evidence" value="ECO:0007669"/>
    <property type="project" value="UniProtKB-UniRule"/>
</dbReference>
<dbReference type="GO" id="GO:0003968">
    <property type="term" value="F:RNA-directed RNA polymerase activity"/>
    <property type="evidence" value="ECO:0007669"/>
    <property type="project" value="UniProtKB-UniRule"/>
</dbReference>
<dbReference type="GO" id="GO:0075526">
    <property type="term" value="P:cap snatching"/>
    <property type="evidence" value="ECO:0007669"/>
    <property type="project" value="UniProtKB-UniRule"/>
</dbReference>
<dbReference type="GO" id="GO:0039689">
    <property type="term" value="P:negative stranded viral RNA replication"/>
    <property type="evidence" value="ECO:0000250"/>
    <property type="project" value="UniProtKB"/>
</dbReference>
<dbReference type="GO" id="GO:0039696">
    <property type="term" value="P:RNA-templated viral transcription"/>
    <property type="evidence" value="ECO:0000250"/>
    <property type="project" value="UniProtKB"/>
</dbReference>
<dbReference type="FunFam" id="3.30.70.2640:FF:000001">
    <property type="entry name" value="RNA-directed RNA polymerase L"/>
    <property type="match status" value="1"/>
</dbReference>
<dbReference type="Gene3D" id="3.30.70.2640">
    <property type="entry name" value="Arenavirus RNA polymerase"/>
    <property type="match status" value="1"/>
</dbReference>
<dbReference type="Gene3D" id="1.20.1440.300">
    <property type="entry name" value="RNA-directed RNA polymerase L, helical domain"/>
    <property type="match status" value="1"/>
</dbReference>
<dbReference type="HAMAP" id="MF_04086">
    <property type="entry name" value="ARENA_L"/>
    <property type="match status" value="1"/>
</dbReference>
<dbReference type="InterPro" id="IPR026382">
    <property type="entry name" value="CapSnatch_arenavir"/>
</dbReference>
<dbReference type="InterPro" id="IPR048006">
    <property type="entry name" value="CapSnatch_bunyavir"/>
</dbReference>
<dbReference type="InterPro" id="IPR007099">
    <property type="entry name" value="RNA-dir_pol_NSvirus"/>
</dbReference>
<dbReference type="InterPro" id="IPR010453">
    <property type="entry name" value="RNA_pol_arenavir"/>
</dbReference>
<dbReference type="NCBIfam" id="TIGR04202">
    <property type="entry name" value="capSnatchArena"/>
    <property type="match status" value="1"/>
</dbReference>
<dbReference type="Pfam" id="PF06317">
    <property type="entry name" value="Arena_RNA_pol"/>
    <property type="match status" value="1"/>
</dbReference>
<dbReference type="Pfam" id="PF17296">
    <property type="entry name" value="ArenaCapSnatch"/>
    <property type="match status" value="1"/>
</dbReference>
<dbReference type="PIRSF" id="PIRSF000836">
    <property type="entry name" value="L_ArenaV"/>
    <property type="match status" value="1"/>
</dbReference>
<dbReference type="PROSITE" id="PS50525">
    <property type="entry name" value="RDRP_SSRNA_NEG_SEG"/>
    <property type="match status" value="1"/>
</dbReference>
<feature type="chain" id="PRO_0000361645" description="RNA-directed RNA polymerase L">
    <location>
        <begin position="1"/>
        <end position="2210"/>
    </location>
</feature>
<feature type="domain" description="RdRp catalytic" evidence="1">
    <location>
        <begin position="1163"/>
        <end position="1359"/>
    </location>
</feature>
<feature type="region of interest" description="Endonuclease" evidence="1">
    <location>
        <begin position="26"/>
        <end position="285"/>
    </location>
</feature>
<feature type="active site" evidence="1">
    <location>
        <position position="114"/>
    </location>
</feature>
<feature type="binding site" evidence="1">
    <location>
        <position position="51"/>
    </location>
    <ligand>
        <name>Mn(2+)</name>
        <dbReference type="ChEBI" id="CHEBI:29035"/>
        <label>1</label>
    </ligand>
</feature>
<feature type="binding site" evidence="1">
    <location>
        <position position="88"/>
    </location>
    <ligand>
        <name>Mn(2+)</name>
        <dbReference type="ChEBI" id="CHEBI:29035"/>
        <label>1</label>
    </ligand>
</feature>
<feature type="binding site" evidence="1">
    <location>
        <position position="88"/>
    </location>
    <ligand>
        <name>Mn(2+)</name>
        <dbReference type="ChEBI" id="CHEBI:29035"/>
        <label>2</label>
    </ligand>
</feature>
<feature type="binding site" evidence="1">
    <location>
        <position position="101"/>
    </location>
    <ligand>
        <name>Mn(2+)</name>
        <dbReference type="ChEBI" id="CHEBI:29035"/>
        <label>1</label>
    </ligand>
</feature>
<feature type="binding site" evidence="1">
    <location>
        <position position="1319"/>
    </location>
    <ligand>
        <name>Mg(2+)</name>
        <dbReference type="ChEBI" id="CHEBI:18420"/>
        <note>catalytic; for RdRp activity</note>
    </ligand>
</feature>
<name>L_PIRVV</name>
<keyword id="KW-1157">Cap snatching</keyword>
<keyword id="KW-1035">Host cytoplasm</keyword>
<keyword id="KW-0378">Hydrolase</keyword>
<keyword id="KW-0460">Magnesium</keyword>
<keyword id="KW-0464">Manganese</keyword>
<keyword id="KW-0479">Metal-binding</keyword>
<keyword id="KW-0547">Nucleotide-binding</keyword>
<keyword id="KW-0548">Nucleotidyltransferase</keyword>
<keyword id="KW-1185">Reference proteome</keyword>
<keyword id="KW-0696">RNA-directed RNA polymerase</keyword>
<keyword id="KW-0808">Transferase</keyword>
<keyword id="KW-0693">Viral RNA replication</keyword>
<keyword id="KW-0946">Virion</keyword>
<evidence type="ECO:0000255" key="1">
    <source>
        <dbReference type="HAMAP-Rule" id="MF_04086"/>
    </source>
</evidence>
<comment type="function">
    <text evidence="1">RNA-dependent RNA polymerase, which is responsible for the replication and transcription of the viral RNA genome using antigenomic RNA as an intermediate. During transcription, synthesizes subgenomic RNAs and assures their capping by a cap-snatching mechanism, which involves the endonuclease activity cleaving the host capped pre-mRNAs. These short capped RNAs are then used as primers for viral transcription. The 3'-end of subgenomic mRNAs molecules are heterogeneous and not polyadenylated. The replicase function is to direct synthesis of antigenomic and genomic RNA which are encapsidated and non capped. As a consequence of the use of the same enzyme for both transcription and replication, these mechanisms need to be well coordinated. These processes may be regulated by proteins N and Z in a dose-dependent manner. Z protein inhibits the viral polymerase L und thus the viral transcription and RNA synthesis.</text>
</comment>
<comment type="catalytic activity">
    <reaction evidence="1">
        <text>RNA(n) + a ribonucleoside 5'-triphosphate = RNA(n+1) + diphosphate</text>
        <dbReference type="Rhea" id="RHEA:21248"/>
        <dbReference type="Rhea" id="RHEA-COMP:14527"/>
        <dbReference type="Rhea" id="RHEA-COMP:17342"/>
        <dbReference type="ChEBI" id="CHEBI:33019"/>
        <dbReference type="ChEBI" id="CHEBI:61557"/>
        <dbReference type="ChEBI" id="CHEBI:140395"/>
        <dbReference type="EC" id="2.7.7.48"/>
    </reaction>
</comment>
<comment type="cofactor">
    <cofactor evidence="1">
        <name>Mn(2+)</name>
        <dbReference type="ChEBI" id="CHEBI:29035"/>
    </cofactor>
    <text evidence="1">For endonuclease activity. Binds 2 Mn(2+) ions in the active site. The divalent metal ions are crucial for catalytic activity.</text>
</comment>
<comment type="cofactor">
    <cofactor evidence="1">
        <name>Mg(2+)</name>
        <dbReference type="ChEBI" id="CHEBI:18420"/>
    </cofactor>
    <cofactor evidence="1">
        <name>Mn(2+)</name>
        <dbReference type="ChEBI" id="CHEBI:29035"/>
    </cofactor>
    <text evidence="1">For polymerase activity.</text>
</comment>
<comment type="subunit">
    <text evidence="1">Homomultimer; the oligomeric structure is essential for the polymerase activity. Interacts with nucleoprotein N. Interacts with protein Z; this interaction inhibits viral transcription and replication, Z partially blocks the product exit tunnel for the releasing nascent RNA product.</text>
</comment>
<comment type="subcellular location">
    <subcellularLocation>
        <location evidence="1">Virion</location>
    </subcellularLocation>
    <subcellularLocation>
        <location evidence="1">Host cytoplasm</location>
    </subcellularLocation>
</comment>
<comment type="domain">
    <text evidence="1">The N-terminus contains the endonuclease activity (endoN). The central region contains the RdRp activity.</text>
</comment>
<comment type="miscellaneous">
    <text evidence="1">Classified as His(-) endonuclease since it does not have a histidine upstream of the active site that coordinates the first cation. His(-) endonucleases display very low activity in vitro, although they are clearly active in vivo.</text>
</comment>
<comment type="similarity">
    <text evidence="1">Belongs to the Bunyavirales RNA polymerase family.</text>
</comment>
<protein>
    <recommendedName>
        <fullName evidence="1">RNA-directed RNA polymerase L</fullName>
        <shortName evidence="1">Protein L</shortName>
        <ecNumber evidence="1">2.7.7.48</ecNumber>
    </recommendedName>
    <alternativeName>
        <fullName evidence="1">Large structural protein</fullName>
    </alternativeName>
    <alternativeName>
        <fullName evidence="1">Replicase</fullName>
    </alternativeName>
    <alternativeName>
        <fullName evidence="1">Transcriptase</fullName>
    </alternativeName>
    <domain>
        <recommendedName>
            <fullName evidence="1">cap-snatching endonuclease</fullName>
            <ecNumber evidence="1">3.1.-.-</ecNumber>
        </recommendedName>
    </domain>
</protein>
<sequence length="2210" mass="253470">MEEHVNELHDLVRKWVSDDENFAEQKAIFLSQTKLRAITIEGLKLLSTIVEVDSCQKNSCIHNREKTLNSILRDNKIVCPTLPEIVPDGYRLIGDVLILLEVFVRSNQESFEKKYEQDYTKLMQVKKDLQSHGITLVPMIDGRSSYYVEFMPDWVVEKIRWHLIKLMDLLKEDGESVEELEYERLVSSLSALENQSLGLESLLSIKERGIEYIDRLTKIMYGNLNNNMSVDECKGEILRIYQNFRQLFDQGQFKPKYRKTDREFILKTLREHGLIKCAIMSEEDSCKNCMIHMFKVLTIIKQSFVSNKNIESSFILKEYNQLLSVCNKVKSLKVLNTRRGTLMVLDLIMLNKLLSLIKIYGIKAALTILRMQCIPAVNDRLLSIDFLISIYERKMIKSPKWLEKVHGKLKRVVQDCMFKALEDYLVEIDFDTWFSIKDELLMTQQFKPSICYRSSKGCVCNAETLKNLSMMTEEDFLSYLKILSSLSLSLVNSMKTSSAPKSKINQANDFYGIVHCEEVYFQGFGDNNACTLLYQKTGEKSRCYSVAFSDNEQQIDYGSKISFYADPKRFFLPIMSQDVLNRMCNEMLSWLDFLSDDNIKVVADLLRKLILCVLCTPSKRVQVYLQGFRYLIMAYVNEIHCNDLFAKLEVDALTASERQVMIWMDDLTRIVLEMSKEADMAKSFKFILNLSYLCHLITKETPDRLTDQIKCFEKFLEPKLKFGSLMVNPDSTPELTSEQEDQVCEGLHRLLNKKIFSKCENIPGVSKELVSLCSSLFNSSNLEVKPLLNHDPLTPSFTSTALDLSSNKSVVVPKLNEIGETLTEYDFGKIVSSVVVDLTEHFKTKGKYKLDPRDLRFRIFKKLSSLVEVNPTKKSNRKSESGEVVAPDESFMDELTEEQQLMLSEIEVKVSKTFEGMSKDELNRKQSKEKGAEAHLKRLWSKEVRDKISSETSLHEVKDFDVQLFPFDTYEELVTIVFNDKSAHDFYFLEKYLNPCPLDMLMKNLTLKAFNEGDFFECFKYILIASEFDNKIGRYDHKIRTRLGLKDPALKIREEARISTRESNSESIAKRLDKSFFTNSSLRNLCFYSDESPTTRTGVATDVGKLKFGLSYKEQVGGNRELYVGDLNTKLITRLVEDYAESICSNMKYTCLNSESEFERALLDMKSVVRQGGFAVSMDHSKWGPHMSPAIFAQLLRCLKFRLKDGSEIDKKAVLNILYWHLHKIVEVPFNVVQAFMSGFVKRGLGLMDRGGATLSEEFMFGFFEKGVVPSHLSSVVDMGQGILHNMSDLYGLITEQFINYVLDFCYNVSMTSYTSSDDEIMLSTSSALNHEDGSLNVDVALEILEFHNFLSDKLNKFVSPKTVAGTFASEFKSRFFIWSQEVPLLTKFVAAALHNIKAKAPNQLAETVDTILDQCVANGVSIEIVGAISKRTNSLVCYSGHPLNPFLCLEESDVRDWVDGSRGYRLQRSIENIFPDDLCPNLIRDACRKVFHRIQSGKIEEEFLVASIQGSPDECLNSMLTIADVDEDIKKDLAGYRWLNLRAYGDLRLVLRTKLMSSTRTLQREEIPSLVRSVQSKLSKNFVRGAKRILTDAINKSAFQSCISSGFIGVCKSMGSKCVRDNTGGFVYIKEITKHVMPHTTSYCPYCKPSKNIYCEDALRSVSEYSRPIFWDYFSLVLSNACELGNWVFGAPILPKTVFHLDNPNHFWPIKPSSQTELEDKVGMNHVLYSIRRNYPSIFDEHISPYMSDLNMLRLSWVQKIKFLDLCVALDMSSECLGIISHIMRRKREELYIVKQQELSMSHTRESTNLESGLSLEPQEVCKNFLLQVLFDSMVNPVLLTTSQFRKYFWYGEVLQLPNDASHHLAQFTQFILDCKQLNSSRAMTLDDLDVGYVTSRVKRTTTFVALSTFITSLDWENRHEYKSFQELILSSPCDVFKFEFSMTFSHIRSSHKFRYERCTSYILKVHVVFDKRVLNSNMLEDQSLLITPHSVEYFVSQSGGNHISLDGVGLLPLDPLISGKEVLNIDDVLRHEDVNFSAESPLFSKMRFDFKPFLKELKNKFSYKLIGPDIIMEPLVLDKGQIKEGSRIVSQLKLRLDFKAVFVALGCLEEESRSTFISNLFMYIGSLRGEEHRISMTESNLVQLIDNYPQVFDSMLDATNDWLNCGSFSLCKSKSLGCVMIADERGPFKLKGVNCRRLLPDSQAVEID</sequence>
<proteinExistence type="inferred from homology"/>
<reference key="1">
    <citation type="journal article" date="2004" name="Virus Res.">
        <title>Phylogeny of the Venezuelan arenaviruses.</title>
        <authorList>
            <person name="Cajimat M.N."/>
            <person name="Fulhorst C.F."/>
        </authorList>
    </citation>
    <scope>NUCLEOTIDE SEQUENCE [GENOMIC RNA]</scope>
</reference>
<reference key="2">
    <citation type="journal article" date="2017" name="Crit. Rev. Microbiol.">
        <title>Bunyaviridae RdRps: structure, motifs, and RNA synthesis machinery.</title>
        <authorList>
            <person name="Amroun A."/>
            <person name="Priet S."/>
            <person name="de Lamballerie X."/>
            <person name="Querat G."/>
        </authorList>
    </citation>
    <scope>REVIEW</scope>
</reference>
<reference key="3">
    <citation type="journal article" date="2020" name="Trends Microbiol.">
        <title>The Cap-Snatching Mechanism of Bunyaviruses.</title>
        <authorList>
            <person name="Olschewski S."/>
            <person name="Cusack S."/>
            <person name="Rosenthal M."/>
        </authorList>
    </citation>
    <scope>REVIEW</scope>
</reference>
<organism>
    <name type="scientific">Pirital mammarenavirus (isolate Rat/Venezuela/VAV-488/1995)</name>
    <name type="common">PIRV</name>
    <dbReference type="NCBI Taxonomy" id="3052324"/>
    <lineage>
        <taxon>Viruses</taxon>
        <taxon>Riboviria</taxon>
        <taxon>Orthornavirae</taxon>
        <taxon>Negarnaviricota</taxon>
        <taxon>Polyploviricotina</taxon>
        <taxon>Ellioviricetes</taxon>
        <taxon>Bunyavirales</taxon>
        <taxon>Arenaviridae</taxon>
        <taxon>Mammarenavirus</taxon>
    </lineage>
</organism>